<keyword id="KW-0066">ATP synthesis</keyword>
<keyword id="KW-0997">Cell inner membrane</keyword>
<keyword id="KW-1003">Cell membrane</keyword>
<keyword id="KW-0138">CF(0)</keyword>
<keyword id="KW-0375">Hydrogen ion transport</keyword>
<keyword id="KW-0406">Ion transport</keyword>
<keyword id="KW-0472">Membrane</keyword>
<keyword id="KW-1185">Reference proteome</keyword>
<keyword id="KW-0812">Transmembrane</keyword>
<keyword id="KW-1133">Transmembrane helix</keyword>
<keyword id="KW-0813">Transport</keyword>
<organism>
    <name type="scientific">Shigella boydii serotype 18 (strain CDC 3083-94 / BS512)</name>
    <dbReference type="NCBI Taxonomy" id="344609"/>
    <lineage>
        <taxon>Bacteria</taxon>
        <taxon>Pseudomonadati</taxon>
        <taxon>Pseudomonadota</taxon>
        <taxon>Gammaproteobacteria</taxon>
        <taxon>Enterobacterales</taxon>
        <taxon>Enterobacteriaceae</taxon>
        <taxon>Shigella</taxon>
    </lineage>
</organism>
<name>ATPF_SHIB3</name>
<reference key="1">
    <citation type="submission" date="2008-05" db="EMBL/GenBank/DDBJ databases">
        <title>Complete sequence of Shigella boydii serotype 18 strain BS512.</title>
        <authorList>
            <person name="Rasko D.A."/>
            <person name="Rosovitz M."/>
            <person name="Maurelli A.T."/>
            <person name="Myers G."/>
            <person name="Seshadri R."/>
            <person name="Cer R."/>
            <person name="Jiang L."/>
            <person name="Ravel J."/>
            <person name="Sebastian Y."/>
        </authorList>
    </citation>
    <scope>NUCLEOTIDE SEQUENCE [LARGE SCALE GENOMIC DNA]</scope>
    <source>
        <strain>CDC 3083-94 / BS512</strain>
    </source>
</reference>
<gene>
    <name evidence="1" type="primary">atpF</name>
    <name type="ordered locus">SbBS512_E4185</name>
</gene>
<sequence length="156" mass="17264">MNLNATILGQAIAFVLFVLFCMKYVWPPLMAAIEKRQKEIADGLASAERAHKDLDLAKASATDQLKKAKAEAQVIIEQANKRRSQILDEAKAEAEQERTKIVAQAQAEIEAERKRAREELRKQVAILAVAGAEKIIERSVDEAANSDIVDKLVAEL</sequence>
<protein>
    <recommendedName>
        <fullName evidence="1">ATP synthase subunit b</fullName>
    </recommendedName>
    <alternativeName>
        <fullName evidence="1">ATP synthase F(0) sector subunit b</fullName>
    </alternativeName>
    <alternativeName>
        <fullName evidence="1">ATPase subunit I</fullName>
    </alternativeName>
    <alternativeName>
        <fullName evidence="1">F-type ATPase subunit b</fullName>
        <shortName evidence="1">F-ATPase subunit b</shortName>
    </alternativeName>
</protein>
<accession>B2TUN9</accession>
<dbReference type="EMBL" id="CP001063">
    <property type="protein sequence ID" value="ACD06747.1"/>
    <property type="molecule type" value="Genomic_DNA"/>
</dbReference>
<dbReference type="RefSeq" id="WP_001052219.1">
    <property type="nucleotide sequence ID" value="NC_010658.1"/>
</dbReference>
<dbReference type="SMR" id="B2TUN9"/>
<dbReference type="STRING" id="344609.SbBS512_E4185"/>
<dbReference type="GeneID" id="93778231"/>
<dbReference type="KEGG" id="sbc:SbBS512_E4185"/>
<dbReference type="HOGENOM" id="CLU_079215_4_5_6"/>
<dbReference type="Proteomes" id="UP000001030">
    <property type="component" value="Chromosome"/>
</dbReference>
<dbReference type="GO" id="GO:0005886">
    <property type="term" value="C:plasma membrane"/>
    <property type="evidence" value="ECO:0007669"/>
    <property type="project" value="UniProtKB-SubCell"/>
</dbReference>
<dbReference type="GO" id="GO:0045259">
    <property type="term" value="C:proton-transporting ATP synthase complex"/>
    <property type="evidence" value="ECO:0007669"/>
    <property type="project" value="UniProtKB-KW"/>
</dbReference>
<dbReference type="GO" id="GO:0046933">
    <property type="term" value="F:proton-transporting ATP synthase activity, rotational mechanism"/>
    <property type="evidence" value="ECO:0007669"/>
    <property type="project" value="UniProtKB-UniRule"/>
</dbReference>
<dbReference type="GO" id="GO:0046961">
    <property type="term" value="F:proton-transporting ATPase activity, rotational mechanism"/>
    <property type="evidence" value="ECO:0007669"/>
    <property type="project" value="TreeGrafter"/>
</dbReference>
<dbReference type="CDD" id="cd06503">
    <property type="entry name" value="ATP-synt_Fo_b"/>
    <property type="match status" value="1"/>
</dbReference>
<dbReference type="FunFam" id="1.20.5.620:FF:000001">
    <property type="entry name" value="ATP synthase subunit b"/>
    <property type="match status" value="1"/>
</dbReference>
<dbReference type="Gene3D" id="1.20.5.620">
    <property type="entry name" value="F1F0 ATP synthase subunit B, membrane domain"/>
    <property type="match status" value="1"/>
</dbReference>
<dbReference type="HAMAP" id="MF_01398">
    <property type="entry name" value="ATP_synth_b_bprime"/>
    <property type="match status" value="1"/>
</dbReference>
<dbReference type="InterPro" id="IPR028987">
    <property type="entry name" value="ATP_synth_B-like_membr_sf"/>
</dbReference>
<dbReference type="InterPro" id="IPR002146">
    <property type="entry name" value="ATP_synth_b/b'su_bac/chlpt"/>
</dbReference>
<dbReference type="InterPro" id="IPR005864">
    <property type="entry name" value="ATP_synth_F0_bsu_bac"/>
</dbReference>
<dbReference type="InterPro" id="IPR050059">
    <property type="entry name" value="ATP_synthase_B_chain"/>
</dbReference>
<dbReference type="NCBIfam" id="TIGR01144">
    <property type="entry name" value="ATP_synt_b"/>
    <property type="match status" value="1"/>
</dbReference>
<dbReference type="NCBIfam" id="NF004411">
    <property type="entry name" value="PRK05759.1-2"/>
    <property type="match status" value="1"/>
</dbReference>
<dbReference type="NCBIfam" id="NF004413">
    <property type="entry name" value="PRK05759.1-4"/>
    <property type="match status" value="1"/>
</dbReference>
<dbReference type="PANTHER" id="PTHR33445:SF1">
    <property type="entry name" value="ATP SYNTHASE SUBUNIT B"/>
    <property type="match status" value="1"/>
</dbReference>
<dbReference type="PANTHER" id="PTHR33445">
    <property type="entry name" value="ATP SYNTHASE SUBUNIT B', CHLOROPLASTIC"/>
    <property type="match status" value="1"/>
</dbReference>
<dbReference type="Pfam" id="PF00430">
    <property type="entry name" value="ATP-synt_B"/>
    <property type="match status" value="1"/>
</dbReference>
<dbReference type="SUPFAM" id="SSF81573">
    <property type="entry name" value="F1F0 ATP synthase subunit B, membrane domain"/>
    <property type="match status" value="1"/>
</dbReference>
<comment type="function">
    <text evidence="1">F(1)F(0) ATP synthase produces ATP from ADP in the presence of a proton or sodium gradient. F-type ATPases consist of two structural domains, F(1) containing the extramembraneous catalytic core and F(0) containing the membrane proton channel, linked together by a central stalk and a peripheral stalk. During catalysis, ATP synthesis in the catalytic domain of F(1) is coupled via a rotary mechanism of the central stalk subunits to proton translocation.</text>
</comment>
<comment type="function">
    <text evidence="1">Component of the F(0) channel, it forms part of the peripheral stalk, linking F(1) to F(0).</text>
</comment>
<comment type="subunit">
    <text evidence="1">F-type ATPases have 2 components, F(1) - the catalytic core - and F(0) - the membrane proton channel. F(1) has five subunits: alpha(3), beta(3), gamma(1), delta(1), epsilon(1). F(0) has three main subunits: a(1), b(2) and c(10-14). The alpha and beta chains form an alternating ring which encloses part of the gamma chain. F(1) is attached to F(0) by a central stalk formed by the gamma and epsilon chains, while a peripheral stalk is formed by the delta and b chains.</text>
</comment>
<comment type="subcellular location">
    <subcellularLocation>
        <location evidence="1">Cell inner membrane</location>
        <topology evidence="1">Single-pass membrane protein</topology>
    </subcellularLocation>
</comment>
<comment type="similarity">
    <text evidence="1">Belongs to the ATPase B chain family.</text>
</comment>
<evidence type="ECO:0000255" key="1">
    <source>
        <dbReference type="HAMAP-Rule" id="MF_01398"/>
    </source>
</evidence>
<feature type="chain" id="PRO_0000368770" description="ATP synthase subunit b">
    <location>
        <begin position="1"/>
        <end position="156"/>
    </location>
</feature>
<feature type="transmembrane region" description="Helical" evidence="1">
    <location>
        <begin position="11"/>
        <end position="31"/>
    </location>
</feature>
<proteinExistence type="inferred from homology"/>